<proteinExistence type="inferred from homology"/>
<organismHost>
    <name type="scientific">Otariidae</name>
    <name type="common">fur seals &amp; sea lions</name>
    <dbReference type="NCBI Taxonomy" id="9702"/>
</organismHost>
<keyword id="KW-1232">Capsid decoration protein</keyword>
<keyword id="KW-0167">Capsid protein</keyword>
<keyword id="KW-1035">Host cytoplasm</keyword>
<keyword id="KW-0946">Virion</keyword>
<organism>
    <name type="scientific">San Miguel sea lion virus serotype 4</name>
    <name type="common">SMSV-4</name>
    <name type="synonym">SMSV serotype 4</name>
    <dbReference type="NCBI Taxonomy" id="36407"/>
    <lineage>
        <taxon>Viruses</taxon>
        <taxon>Riboviria</taxon>
        <taxon>Orthornavirae</taxon>
        <taxon>Pisuviricota</taxon>
        <taxon>Pisoniviricetes</taxon>
        <taxon>Picornavirales</taxon>
        <taxon>Caliciviridae</taxon>
        <taxon>Vesivirus</taxon>
        <taxon>Vesicular exanthema of swine virus</taxon>
    </lineage>
</organism>
<gene>
    <name type="ORF">ORF3</name>
</gene>
<accession>P36289</accession>
<protein>
    <recommendedName>
        <fullName>Minor capsid protein VP2</fullName>
    </recommendedName>
</protein>
<sequence>MNYANFGLDFLNSVANAVVEGKKLDLASKGLQLKSRALDTERAFNYDRLAFEKHKFETNNDLKIYGDAMRISALRAAGLRINPYSNGRQIYQDEADLANLHSYYSFYKTD</sequence>
<feature type="chain" id="PRO_0000100127" description="Minor capsid protein VP2">
    <location>
        <begin position="1"/>
        <end position="110"/>
    </location>
</feature>
<comment type="function">
    <text evidence="1">Minor structural protein that forms a portal-like structure at a unique three-fold axis of symmetry, following binding to the host receptor. The channel formed by VP2 may allow the delivery of the viral genome through the host endosomal membrane.</text>
</comment>
<comment type="subunit">
    <text evidence="1">Homooligomer. The portal-like structure consists in 12 copies of VP2. Interacts with capsid protein VP1.</text>
</comment>
<comment type="subcellular location">
    <subcellularLocation>
        <location evidence="1">Virion</location>
    </subcellularLocation>
    <subcellularLocation>
        <location evidence="2">Host cytoplasm</location>
    </subcellularLocation>
</comment>
<comment type="domain">
    <text evidence="1">The N-terminus domain points away from the virion surface.</text>
</comment>
<comment type="miscellaneous">
    <text evidence="1">Translated by a ribosomal termination-reinitiation process from the bicistronic mRNA coding for VP1 and VP2.</text>
</comment>
<comment type="similarity">
    <text evidence="2">Belongs to the vesivirus VP2 protein family.</text>
</comment>
<dbReference type="EMBL" id="M87482">
    <property type="protein sequence ID" value="AAA16221.1"/>
    <property type="molecule type" value="Genomic_RNA"/>
</dbReference>
<dbReference type="PIR" id="D48562">
    <property type="entry name" value="D48562"/>
</dbReference>
<dbReference type="GO" id="GO:0030430">
    <property type="term" value="C:host cell cytoplasm"/>
    <property type="evidence" value="ECO:0007669"/>
    <property type="project" value="UniProtKB-SubCell"/>
</dbReference>
<dbReference type="GO" id="GO:0098021">
    <property type="term" value="C:viral capsid, decoration"/>
    <property type="evidence" value="ECO:0007669"/>
    <property type="project" value="UniProtKB-KW"/>
</dbReference>
<dbReference type="InterPro" id="IPR007996">
    <property type="entry name" value="Vesivirus_VP2"/>
</dbReference>
<dbReference type="Pfam" id="PF05332">
    <property type="entry name" value="Vesi_VP2"/>
    <property type="match status" value="1"/>
</dbReference>
<evidence type="ECO:0000250" key="1">
    <source>
        <dbReference type="UniProtKB" id="P28711"/>
    </source>
</evidence>
<evidence type="ECO:0000305" key="2"/>
<reference key="1">
    <citation type="journal article" date="1992" name="Virus Res.">
        <title>Nucleotide sequence of the capsid protein gene of two serotypes of San Miguel sea lion virus: identification of conserved and non-conserved amino acid sequences among calicivirus capsid proteins.</title>
        <authorList>
            <person name="Neill J.D."/>
        </authorList>
    </citation>
    <scope>NUCLEOTIDE SEQUENCE [GENOMIC RNA]</scope>
</reference>
<name>VP2_SMSV4</name>